<comment type="catalytic activity">
    <reaction evidence="1">
        <text>CMP + ATP = CDP + ADP</text>
        <dbReference type="Rhea" id="RHEA:11600"/>
        <dbReference type="ChEBI" id="CHEBI:30616"/>
        <dbReference type="ChEBI" id="CHEBI:58069"/>
        <dbReference type="ChEBI" id="CHEBI:60377"/>
        <dbReference type="ChEBI" id="CHEBI:456216"/>
        <dbReference type="EC" id="2.7.4.25"/>
    </reaction>
</comment>
<comment type="catalytic activity">
    <reaction evidence="1">
        <text>dCMP + ATP = dCDP + ADP</text>
        <dbReference type="Rhea" id="RHEA:25094"/>
        <dbReference type="ChEBI" id="CHEBI:30616"/>
        <dbReference type="ChEBI" id="CHEBI:57566"/>
        <dbReference type="ChEBI" id="CHEBI:58593"/>
        <dbReference type="ChEBI" id="CHEBI:456216"/>
        <dbReference type="EC" id="2.7.4.25"/>
    </reaction>
</comment>
<comment type="subcellular location">
    <subcellularLocation>
        <location evidence="1">Cytoplasm</location>
    </subcellularLocation>
</comment>
<comment type="similarity">
    <text evidence="1">Belongs to the cytidylate kinase family. Type 1 subfamily.</text>
</comment>
<keyword id="KW-0067">ATP-binding</keyword>
<keyword id="KW-0963">Cytoplasm</keyword>
<keyword id="KW-0418">Kinase</keyword>
<keyword id="KW-0547">Nucleotide-binding</keyword>
<keyword id="KW-0808">Transferase</keyword>
<reference key="1">
    <citation type="journal article" date="2009" name="Genome Res.">
        <title>Newly introduced genomic prophage islands are critical determinants of in vivo competitiveness in the Liverpool epidemic strain of Pseudomonas aeruginosa.</title>
        <authorList>
            <person name="Winstanley C."/>
            <person name="Langille M.G.I."/>
            <person name="Fothergill J.L."/>
            <person name="Kukavica-Ibrulj I."/>
            <person name="Paradis-Bleau C."/>
            <person name="Sanschagrin F."/>
            <person name="Thomson N.R."/>
            <person name="Winsor G.L."/>
            <person name="Quail M.A."/>
            <person name="Lennard N."/>
            <person name="Bignell A."/>
            <person name="Clarke L."/>
            <person name="Seeger K."/>
            <person name="Saunders D."/>
            <person name="Harris D."/>
            <person name="Parkhill J."/>
            <person name="Hancock R.E.W."/>
            <person name="Brinkman F.S.L."/>
            <person name="Levesque R.C."/>
        </authorList>
    </citation>
    <scope>NUCLEOTIDE SEQUENCE [LARGE SCALE GENOMIC DNA]</scope>
    <source>
        <strain>LESB58</strain>
    </source>
</reference>
<organism>
    <name type="scientific">Pseudomonas aeruginosa (strain LESB58)</name>
    <dbReference type="NCBI Taxonomy" id="557722"/>
    <lineage>
        <taxon>Bacteria</taxon>
        <taxon>Pseudomonadati</taxon>
        <taxon>Pseudomonadota</taxon>
        <taxon>Gammaproteobacteria</taxon>
        <taxon>Pseudomonadales</taxon>
        <taxon>Pseudomonadaceae</taxon>
        <taxon>Pseudomonas</taxon>
    </lineage>
</organism>
<sequence length="229" mass="24594">MNGAVPMLAIDGPSGAGKGTVAGLLARRLGWNLLDSGALYRLLAFAAVNHGVDLTNEEALKVLAAHLDVQFVAADGSHGQRIILEGEEVTDVIRTEQVGAGASQVAALPAVRDALLQRQRAFLEAPGLVADGRDMGTVVFPDAPLKIFLTASAEERARRRYLQLKAKGADVDQSALLEEIRERDERDSQRAVAPLKPADDAILLDSTEMSIEAVVETIIRHCERQGWDV</sequence>
<name>KCY_PSEA8</name>
<dbReference type="EC" id="2.7.4.25" evidence="1"/>
<dbReference type="EMBL" id="FM209186">
    <property type="protein sequence ID" value="CAW26633.1"/>
    <property type="molecule type" value="Genomic_DNA"/>
</dbReference>
<dbReference type="RefSeq" id="WP_003091443.1">
    <property type="nucleotide sequence ID" value="NC_011770.1"/>
</dbReference>
<dbReference type="SMR" id="B7VAL6"/>
<dbReference type="KEGG" id="pag:PLES_19051"/>
<dbReference type="HOGENOM" id="CLU_079959_0_2_6"/>
<dbReference type="GO" id="GO:0005829">
    <property type="term" value="C:cytosol"/>
    <property type="evidence" value="ECO:0007669"/>
    <property type="project" value="TreeGrafter"/>
</dbReference>
<dbReference type="GO" id="GO:0005524">
    <property type="term" value="F:ATP binding"/>
    <property type="evidence" value="ECO:0007669"/>
    <property type="project" value="UniProtKB-UniRule"/>
</dbReference>
<dbReference type="GO" id="GO:0036430">
    <property type="term" value="F:CMP kinase activity"/>
    <property type="evidence" value="ECO:0007669"/>
    <property type="project" value="RHEA"/>
</dbReference>
<dbReference type="GO" id="GO:0036431">
    <property type="term" value="F:dCMP kinase activity"/>
    <property type="evidence" value="ECO:0007669"/>
    <property type="project" value="RHEA"/>
</dbReference>
<dbReference type="GO" id="GO:0015949">
    <property type="term" value="P:nucleobase-containing small molecule interconversion"/>
    <property type="evidence" value="ECO:0007669"/>
    <property type="project" value="TreeGrafter"/>
</dbReference>
<dbReference type="GO" id="GO:0006220">
    <property type="term" value="P:pyrimidine nucleotide metabolic process"/>
    <property type="evidence" value="ECO:0007669"/>
    <property type="project" value="UniProtKB-UniRule"/>
</dbReference>
<dbReference type="CDD" id="cd02020">
    <property type="entry name" value="CMPK"/>
    <property type="match status" value="1"/>
</dbReference>
<dbReference type="FunFam" id="3.40.50.300:FF:000262">
    <property type="entry name" value="Cytidylate kinase"/>
    <property type="match status" value="1"/>
</dbReference>
<dbReference type="Gene3D" id="3.40.50.300">
    <property type="entry name" value="P-loop containing nucleotide triphosphate hydrolases"/>
    <property type="match status" value="1"/>
</dbReference>
<dbReference type="HAMAP" id="MF_00238">
    <property type="entry name" value="Cytidyl_kinase_type1"/>
    <property type="match status" value="1"/>
</dbReference>
<dbReference type="InterPro" id="IPR003136">
    <property type="entry name" value="Cytidylate_kin"/>
</dbReference>
<dbReference type="InterPro" id="IPR011994">
    <property type="entry name" value="Cytidylate_kinase_dom"/>
</dbReference>
<dbReference type="InterPro" id="IPR027417">
    <property type="entry name" value="P-loop_NTPase"/>
</dbReference>
<dbReference type="NCBIfam" id="TIGR00017">
    <property type="entry name" value="cmk"/>
    <property type="match status" value="1"/>
</dbReference>
<dbReference type="PANTHER" id="PTHR21299:SF2">
    <property type="entry name" value="CYTIDYLATE KINASE"/>
    <property type="match status" value="1"/>
</dbReference>
<dbReference type="PANTHER" id="PTHR21299">
    <property type="entry name" value="CYTIDYLATE KINASE/PANTOATE-BETA-ALANINE LIGASE"/>
    <property type="match status" value="1"/>
</dbReference>
<dbReference type="Pfam" id="PF02224">
    <property type="entry name" value="Cytidylate_kin"/>
    <property type="match status" value="1"/>
</dbReference>
<dbReference type="SUPFAM" id="SSF52540">
    <property type="entry name" value="P-loop containing nucleoside triphosphate hydrolases"/>
    <property type="match status" value="1"/>
</dbReference>
<evidence type="ECO:0000255" key="1">
    <source>
        <dbReference type="HAMAP-Rule" id="MF_00238"/>
    </source>
</evidence>
<accession>B7VAL6</accession>
<proteinExistence type="inferred from homology"/>
<protein>
    <recommendedName>
        <fullName evidence="1">Cytidylate kinase</fullName>
        <shortName evidence="1">CK</shortName>
        <ecNumber evidence="1">2.7.4.25</ecNumber>
    </recommendedName>
    <alternativeName>
        <fullName evidence="1">Cytidine monophosphate kinase</fullName>
        <shortName evidence="1">CMP kinase</shortName>
    </alternativeName>
</protein>
<gene>
    <name evidence="1" type="primary">cmk</name>
    <name type="ordered locus">PLES_19051</name>
</gene>
<feature type="chain" id="PRO_1000119026" description="Cytidylate kinase">
    <location>
        <begin position="1"/>
        <end position="229"/>
    </location>
</feature>
<feature type="binding site" evidence="1">
    <location>
        <begin position="12"/>
        <end position="20"/>
    </location>
    <ligand>
        <name>ATP</name>
        <dbReference type="ChEBI" id="CHEBI:30616"/>
    </ligand>
</feature>